<evidence type="ECO:0000255" key="1">
    <source>
        <dbReference type="HAMAP-Rule" id="MF_00418"/>
    </source>
</evidence>
<evidence type="ECO:0000305" key="2"/>
<comment type="function">
    <text evidence="1">Catalyzes the condensation of (S)-aspartate-beta-semialdehyde [(S)-ASA] and pyruvate to 4-hydroxy-tetrahydrodipicolinate (HTPA).</text>
</comment>
<comment type="catalytic activity">
    <reaction evidence="1">
        <text>L-aspartate 4-semialdehyde + pyruvate = (2S,4S)-4-hydroxy-2,3,4,5-tetrahydrodipicolinate + H2O + H(+)</text>
        <dbReference type="Rhea" id="RHEA:34171"/>
        <dbReference type="ChEBI" id="CHEBI:15361"/>
        <dbReference type="ChEBI" id="CHEBI:15377"/>
        <dbReference type="ChEBI" id="CHEBI:15378"/>
        <dbReference type="ChEBI" id="CHEBI:67139"/>
        <dbReference type="ChEBI" id="CHEBI:537519"/>
        <dbReference type="EC" id="4.3.3.7"/>
    </reaction>
</comment>
<comment type="pathway">
    <text evidence="1">Amino-acid biosynthesis; L-lysine biosynthesis via DAP pathway; (S)-tetrahydrodipicolinate from L-aspartate: step 3/4.</text>
</comment>
<comment type="subunit">
    <text evidence="1">Homotetramer; dimer of dimers.</text>
</comment>
<comment type="subcellular location">
    <subcellularLocation>
        <location evidence="1">Cytoplasm</location>
    </subcellularLocation>
</comment>
<comment type="similarity">
    <text evidence="1">Belongs to the DapA family.</text>
</comment>
<comment type="caution">
    <text evidence="2">Was originally thought to be a dihydrodipicolinate synthase (DHDPS), catalyzing the condensation of (S)-aspartate-beta-semialdehyde [(S)-ASA] and pyruvate to dihydrodipicolinate (DHDP). However, it was shown in E.coli that the product of the enzymatic reaction is not dihydrodipicolinate but in fact (4S)-4-hydroxy-2,3,4,5-tetrahydro-(2S)-dipicolinic acid (HTPA), and that the consecutive dehydration reaction leading to DHDP is not spontaneous but catalyzed by DapB.</text>
</comment>
<reference key="1">
    <citation type="journal article" date="2003" name="Proc. Natl. Acad. Sci. U.S.A.">
        <title>The complete genome sequence of Mycobacterium bovis.</title>
        <authorList>
            <person name="Garnier T."/>
            <person name="Eiglmeier K."/>
            <person name="Camus J.-C."/>
            <person name="Medina N."/>
            <person name="Mansoor H."/>
            <person name="Pryor M."/>
            <person name="Duthoy S."/>
            <person name="Grondin S."/>
            <person name="Lacroix C."/>
            <person name="Monsempe C."/>
            <person name="Simon S."/>
            <person name="Harris B."/>
            <person name="Atkin R."/>
            <person name="Doggett J."/>
            <person name="Mayes R."/>
            <person name="Keating L."/>
            <person name="Wheeler P.R."/>
            <person name="Parkhill J."/>
            <person name="Barrell B.G."/>
            <person name="Cole S.T."/>
            <person name="Gordon S.V."/>
            <person name="Hewinson R.G."/>
        </authorList>
    </citation>
    <scope>NUCLEOTIDE SEQUENCE [LARGE SCALE GENOMIC DNA]</scope>
    <source>
        <strain>ATCC BAA-935 / AF2122/97</strain>
    </source>
</reference>
<reference key="2">
    <citation type="journal article" date="2017" name="Genome Announc.">
        <title>Updated reference genome sequence and annotation of Mycobacterium bovis AF2122/97.</title>
        <authorList>
            <person name="Malone K.M."/>
            <person name="Farrell D."/>
            <person name="Stuber T.P."/>
            <person name="Schubert O.T."/>
            <person name="Aebersold R."/>
            <person name="Robbe-Austerman S."/>
            <person name="Gordon S.V."/>
        </authorList>
    </citation>
    <scope>NUCLEOTIDE SEQUENCE [LARGE SCALE GENOMIC DNA]</scope>
    <scope>GENOME REANNOTATION</scope>
    <source>
        <strain>ATCC BAA-935 / AF2122/97</strain>
    </source>
</reference>
<feature type="chain" id="PRO_0000103126" description="4-hydroxy-tetrahydrodipicolinate synthase">
    <location>
        <begin position="1"/>
        <end position="300"/>
    </location>
</feature>
<feature type="active site" description="Proton donor/acceptor" evidence="1">
    <location>
        <position position="143"/>
    </location>
</feature>
<feature type="active site" description="Schiff-base intermediate with substrate" evidence="1">
    <location>
        <position position="171"/>
    </location>
</feature>
<feature type="binding site" evidence="1">
    <location>
        <position position="55"/>
    </location>
    <ligand>
        <name>pyruvate</name>
        <dbReference type="ChEBI" id="CHEBI:15361"/>
    </ligand>
</feature>
<feature type="binding site" evidence="1">
    <location>
        <position position="211"/>
    </location>
    <ligand>
        <name>pyruvate</name>
        <dbReference type="ChEBI" id="CHEBI:15361"/>
    </ligand>
</feature>
<feature type="site" description="Part of a proton relay during catalysis" evidence="1">
    <location>
        <position position="54"/>
    </location>
</feature>
<feature type="site" description="Part of a proton relay during catalysis" evidence="1">
    <location>
        <position position="117"/>
    </location>
</feature>
<sequence length="300" mass="30858">MTTVGFDVAARLGTLLTAMVTPFSGDGSLDTATAARLANHLVDQGCDGLVVSGTTGESPTTTDGEKIELLRAVLEAVGDRARVIAGAGTYDTAHSIRLAKACAAEGAHGLLVVTPYYSKPPQRGLQAHFTAVADATELPMLLYDIPGRSAVPIEPDTIRALASHPNIVGVKDAKADLHSGAQIMADTGLAYYSGDDALNLPWLAMGATGFISVIAHLAAGQLRELLSAFGSGDIATARKINIAVAPLCNAMSRLGGVTLSKAGLRLQGIDVGDPRLPQVAATPEQIDALAADMRAASVLR</sequence>
<organism>
    <name type="scientific">Mycobacterium bovis (strain ATCC BAA-935 / AF2122/97)</name>
    <dbReference type="NCBI Taxonomy" id="233413"/>
    <lineage>
        <taxon>Bacteria</taxon>
        <taxon>Bacillati</taxon>
        <taxon>Actinomycetota</taxon>
        <taxon>Actinomycetes</taxon>
        <taxon>Mycobacteriales</taxon>
        <taxon>Mycobacteriaceae</taxon>
        <taxon>Mycobacterium</taxon>
        <taxon>Mycobacterium tuberculosis complex</taxon>
    </lineage>
</organism>
<accession>P63946</accession>
<accession>A0A1R3Y241</accession>
<accession>O33295</accession>
<accession>X2BLS1</accession>
<name>DAPA_MYCBO</name>
<dbReference type="EC" id="4.3.3.7" evidence="1"/>
<dbReference type="EMBL" id="LT708304">
    <property type="protein sequence ID" value="SIU01392.1"/>
    <property type="molecule type" value="Genomic_DNA"/>
</dbReference>
<dbReference type="RefSeq" id="NP_856420.1">
    <property type="nucleotide sequence ID" value="NC_002945.3"/>
</dbReference>
<dbReference type="RefSeq" id="WP_003900564.1">
    <property type="nucleotide sequence ID" value="NC_002945.4"/>
</dbReference>
<dbReference type="SMR" id="P63946"/>
<dbReference type="GeneID" id="45426740"/>
<dbReference type="KEGG" id="mbo:BQ2027_MB2774C"/>
<dbReference type="PATRIC" id="fig|233413.5.peg.3040"/>
<dbReference type="UniPathway" id="UPA00034">
    <property type="reaction ID" value="UER00017"/>
</dbReference>
<dbReference type="Proteomes" id="UP000001419">
    <property type="component" value="Chromosome"/>
</dbReference>
<dbReference type="GO" id="GO:0005829">
    <property type="term" value="C:cytosol"/>
    <property type="evidence" value="ECO:0007669"/>
    <property type="project" value="TreeGrafter"/>
</dbReference>
<dbReference type="GO" id="GO:0008840">
    <property type="term" value="F:4-hydroxy-tetrahydrodipicolinate synthase activity"/>
    <property type="evidence" value="ECO:0007669"/>
    <property type="project" value="UniProtKB-UniRule"/>
</dbReference>
<dbReference type="GO" id="GO:0019877">
    <property type="term" value="P:diaminopimelate biosynthetic process"/>
    <property type="evidence" value="ECO:0007669"/>
    <property type="project" value="UniProtKB-UniRule"/>
</dbReference>
<dbReference type="GO" id="GO:0009089">
    <property type="term" value="P:lysine biosynthetic process via diaminopimelate"/>
    <property type="evidence" value="ECO:0007669"/>
    <property type="project" value="UniProtKB-UniRule"/>
</dbReference>
<dbReference type="CDD" id="cd00950">
    <property type="entry name" value="DHDPS"/>
    <property type="match status" value="1"/>
</dbReference>
<dbReference type="FunFam" id="3.20.20.70:FF:000273">
    <property type="entry name" value="4-hydroxy-tetrahydrodipicolinate synthase"/>
    <property type="match status" value="1"/>
</dbReference>
<dbReference type="Gene3D" id="3.20.20.70">
    <property type="entry name" value="Aldolase class I"/>
    <property type="match status" value="1"/>
</dbReference>
<dbReference type="HAMAP" id="MF_00418">
    <property type="entry name" value="DapA"/>
    <property type="match status" value="1"/>
</dbReference>
<dbReference type="InterPro" id="IPR013785">
    <property type="entry name" value="Aldolase_TIM"/>
</dbReference>
<dbReference type="InterPro" id="IPR005263">
    <property type="entry name" value="DapA"/>
</dbReference>
<dbReference type="InterPro" id="IPR002220">
    <property type="entry name" value="DapA-like"/>
</dbReference>
<dbReference type="InterPro" id="IPR020625">
    <property type="entry name" value="Schiff_base-form_aldolases_AS"/>
</dbReference>
<dbReference type="InterPro" id="IPR020624">
    <property type="entry name" value="Schiff_base-form_aldolases_CS"/>
</dbReference>
<dbReference type="NCBIfam" id="TIGR00674">
    <property type="entry name" value="dapA"/>
    <property type="match status" value="1"/>
</dbReference>
<dbReference type="PANTHER" id="PTHR12128:SF66">
    <property type="entry name" value="4-HYDROXY-2-OXOGLUTARATE ALDOLASE, MITOCHONDRIAL"/>
    <property type="match status" value="1"/>
</dbReference>
<dbReference type="PANTHER" id="PTHR12128">
    <property type="entry name" value="DIHYDRODIPICOLINATE SYNTHASE"/>
    <property type="match status" value="1"/>
</dbReference>
<dbReference type="Pfam" id="PF00701">
    <property type="entry name" value="DHDPS"/>
    <property type="match status" value="1"/>
</dbReference>
<dbReference type="PIRSF" id="PIRSF001365">
    <property type="entry name" value="DHDPS"/>
    <property type="match status" value="1"/>
</dbReference>
<dbReference type="PRINTS" id="PR00146">
    <property type="entry name" value="DHPICSNTHASE"/>
</dbReference>
<dbReference type="SMART" id="SM01130">
    <property type="entry name" value="DHDPS"/>
    <property type="match status" value="1"/>
</dbReference>
<dbReference type="SUPFAM" id="SSF51569">
    <property type="entry name" value="Aldolase"/>
    <property type="match status" value="1"/>
</dbReference>
<dbReference type="PROSITE" id="PS00665">
    <property type="entry name" value="DHDPS_1"/>
    <property type="match status" value="1"/>
</dbReference>
<dbReference type="PROSITE" id="PS00666">
    <property type="entry name" value="DHDPS_2"/>
    <property type="match status" value="1"/>
</dbReference>
<keyword id="KW-0028">Amino-acid biosynthesis</keyword>
<keyword id="KW-0963">Cytoplasm</keyword>
<keyword id="KW-0220">Diaminopimelate biosynthesis</keyword>
<keyword id="KW-0456">Lyase</keyword>
<keyword id="KW-0457">Lysine biosynthesis</keyword>
<keyword id="KW-1185">Reference proteome</keyword>
<keyword id="KW-0704">Schiff base</keyword>
<protein>
    <recommendedName>
        <fullName evidence="1">4-hydroxy-tetrahydrodipicolinate synthase</fullName>
        <shortName evidence="1">HTPA synthase</shortName>
        <ecNumber evidence="1">4.3.3.7</ecNumber>
    </recommendedName>
</protein>
<proteinExistence type="inferred from homology"/>
<gene>
    <name evidence="1" type="primary">dapA</name>
    <name type="ordered locus">BQ2027_MB2774C</name>
</gene>